<gene>
    <name type="primary">nkx-2.5</name>
</gene>
<evidence type="ECO:0000250" key="1">
    <source>
        <dbReference type="UniProtKB" id="P42582"/>
    </source>
</evidence>
<evidence type="ECO:0000250" key="2">
    <source>
        <dbReference type="UniProtKB" id="P52952"/>
    </source>
</evidence>
<evidence type="ECO:0000255" key="3">
    <source>
        <dbReference type="PROSITE-ProRule" id="PRU00108"/>
    </source>
</evidence>
<evidence type="ECO:0000256" key="4">
    <source>
        <dbReference type="SAM" id="MobiDB-lite"/>
    </source>
</evidence>
<evidence type="ECO:0000305" key="5"/>
<name>NKX25_XENLA</name>
<sequence>MFASPVTSTPFSVKDILNLEQHQSGLSPMDITSRLENSSCMLSTFKQESYPGTPCLSELTEEMSQRDTAKGPSSFPGSFFVKNYLEMDSKDPKDHKKDICPLQKTLEHDKREAEDPERPRQRKRRKPRVLFSQAQVYELERRFKQQKYLSAPERDHLANVLKLTSTQVKIWFQNRRYKCKRQRQDQTLEMVGLPPPRRIAVPVLVRDGKPCLGESSPYNSPYNVSINPYSYNTYPAYSNYSNPACSGSYNCSYSSMPSMQPTSAGNNFMNFSVGDLNTVQTPIQQASSVSALHHGIRAW</sequence>
<dbReference type="EMBL" id="L25600">
    <property type="protein sequence ID" value="AAA19861.1"/>
    <property type="molecule type" value="mRNA"/>
</dbReference>
<dbReference type="PIR" id="I51442">
    <property type="entry name" value="I51442"/>
</dbReference>
<dbReference type="SMR" id="P42583"/>
<dbReference type="AGR" id="Xenbase:XB-GENE-865753"/>
<dbReference type="Xenbase" id="XB-GENE-865753">
    <property type="gene designation" value="nkx2-5.S"/>
</dbReference>
<dbReference type="Proteomes" id="UP000186698">
    <property type="component" value="Unplaced"/>
</dbReference>
<dbReference type="GO" id="GO:0005634">
    <property type="term" value="C:nucleus"/>
    <property type="evidence" value="ECO:0000318"/>
    <property type="project" value="GO_Central"/>
</dbReference>
<dbReference type="GO" id="GO:0032991">
    <property type="term" value="C:protein-containing complex"/>
    <property type="evidence" value="ECO:0000250"/>
    <property type="project" value="UniProtKB"/>
</dbReference>
<dbReference type="GO" id="GO:0032993">
    <property type="term" value="C:protein-DNA complex"/>
    <property type="evidence" value="ECO:0000250"/>
    <property type="project" value="UniProtKB"/>
</dbReference>
<dbReference type="GO" id="GO:0000981">
    <property type="term" value="F:DNA-binding transcription factor activity, RNA polymerase II-specific"/>
    <property type="evidence" value="ECO:0000318"/>
    <property type="project" value="GO_Central"/>
</dbReference>
<dbReference type="GO" id="GO:0000978">
    <property type="term" value="F:RNA polymerase II cis-regulatory region sequence-specific DNA binding"/>
    <property type="evidence" value="ECO:0000250"/>
    <property type="project" value="UniProtKB"/>
</dbReference>
<dbReference type="GO" id="GO:0030154">
    <property type="term" value="P:cell differentiation"/>
    <property type="evidence" value="ECO:0000318"/>
    <property type="project" value="GO_Central"/>
</dbReference>
<dbReference type="GO" id="GO:0006357">
    <property type="term" value="P:regulation of transcription by RNA polymerase II"/>
    <property type="evidence" value="ECO:0000318"/>
    <property type="project" value="GO_Central"/>
</dbReference>
<dbReference type="CDD" id="cd00086">
    <property type="entry name" value="homeodomain"/>
    <property type="match status" value="1"/>
</dbReference>
<dbReference type="FunFam" id="1.10.10.60:FF:000078">
    <property type="entry name" value="NK2 homeobox 3"/>
    <property type="match status" value="1"/>
</dbReference>
<dbReference type="Gene3D" id="1.10.10.60">
    <property type="entry name" value="Homeodomain-like"/>
    <property type="match status" value="1"/>
</dbReference>
<dbReference type="InterPro" id="IPR001356">
    <property type="entry name" value="HD"/>
</dbReference>
<dbReference type="InterPro" id="IPR020479">
    <property type="entry name" value="HD_metazoa"/>
</dbReference>
<dbReference type="InterPro" id="IPR017970">
    <property type="entry name" value="Homeobox_CS"/>
</dbReference>
<dbReference type="InterPro" id="IPR050394">
    <property type="entry name" value="Homeobox_NK-like"/>
</dbReference>
<dbReference type="InterPro" id="IPR009057">
    <property type="entry name" value="Homeodomain-like_sf"/>
</dbReference>
<dbReference type="PANTHER" id="PTHR24340">
    <property type="entry name" value="HOMEOBOX PROTEIN NKX"/>
    <property type="match status" value="1"/>
</dbReference>
<dbReference type="PANTHER" id="PTHR24340:SF28">
    <property type="entry name" value="HOMEOBOX PROTEIN NKX-2.5"/>
    <property type="match status" value="1"/>
</dbReference>
<dbReference type="Pfam" id="PF00046">
    <property type="entry name" value="Homeodomain"/>
    <property type="match status" value="1"/>
</dbReference>
<dbReference type="PRINTS" id="PR00024">
    <property type="entry name" value="HOMEOBOX"/>
</dbReference>
<dbReference type="SMART" id="SM00389">
    <property type="entry name" value="HOX"/>
    <property type="match status" value="1"/>
</dbReference>
<dbReference type="SUPFAM" id="SSF46689">
    <property type="entry name" value="Homeodomain-like"/>
    <property type="match status" value="1"/>
</dbReference>
<dbReference type="PROSITE" id="PS00027">
    <property type="entry name" value="HOMEOBOX_1"/>
    <property type="match status" value="1"/>
</dbReference>
<dbReference type="PROSITE" id="PS50071">
    <property type="entry name" value="HOMEOBOX_2"/>
    <property type="match status" value="1"/>
</dbReference>
<comment type="function">
    <text evidence="1 2">Transcription factor required for the development of the heart and the spleen. Implicated in commitment to and/or differentiation of the myocardial lineage. May regulate the expression of genes involved in cardiogenesis and play a role in the formation of gut and the pharyngeal region. Binds to the core DNA motif of promoter.</text>
</comment>
<comment type="subunit">
    <text evidence="2">Homodimer (via the homeobox); binds DNA as homodimer.</text>
</comment>
<comment type="subcellular location">
    <subcellularLocation>
        <location evidence="5">Nucleus</location>
    </subcellularLocation>
</comment>
<comment type="tissue specificity">
    <text>Heart and gut tissue.</text>
</comment>
<comment type="developmental stage">
    <text>It is first expressed in early neurula embryos (about stage 15) in a bi-lobed pattern at the front of the embryo (this corresponds to the presumptive heart mesoderm). By the end of neural fold closure it is highly expressed in the presumptive heart region. By stage 26-27 (at which heart differentiation begins) its expression can be clearly seen in the heart and the level in embryonic heart decreases at later stages of development. As expression within heart declines low level expression is seen in the foregut and the pharyngeal region.</text>
</comment>
<comment type="domain">
    <text evidence="2">The homeobox domain binds to double-stranded DNA.</text>
</comment>
<comment type="similarity">
    <text evidence="5">Belongs to the NK-2 homeobox family.</text>
</comment>
<reference key="1">
    <citation type="journal article" date="1994" name="Dev. Biol.">
        <title>XNkx-2.5, a Xenopus gene related to Nkx-2.5 and tinman: evidence for a conserved role in cardiac development.</title>
        <authorList>
            <person name="Tonissen K.F."/>
            <person name="Drysdale T.A."/>
            <person name="Lints T.J."/>
            <person name="Harvey R.P."/>
            <person name="Krieg P.A."/>
        </authorList>
    </citation>
    <scope>NUCLEOTIDE SEQUENCE [MRNA]</scope>
    <source>
        <tissue>Heart</tissue>
    </source>
</reference>
<accession>P42583</accession>
<proteinExistence type="evidence at transcript level"/>
<keyword id="KW-0217">Developmental protein</keyword>
<keyword id="KW-0238">DNA-binding</keyword>
<keyword id="KW-0371">Homeobox</keyword>
<keyword id="KW-0539">Nucleus</keyword>
<keyword id="KW-1185">Reference proteome</keyword>
<organism>
    <name type="scientific">Xenopus laevis</name>
    <name type="common">African clawed frog</name>
    <dbReference type="NCBI Taxonomy" id="8355"/>
    <lineage>
        <taxon>Eukaryota</taxon>
        <taxon>Metazoa</taxon>
        <taxon>Chordata</taxon>
        <taxon>Craniata</taxon>
        <taxon>Vertebrata</taxon>
        <taxon>Euteleostomi</taxon>
        <taxon>Amphibia</taxon>
        <taxon>Batrachia</taxon>
        <taxon>Anura</taxon>
        <taxon>Pipoidea</taxon>
        <taxon>Pipidae</taxon>
        <taxon>Xenopodinae</taxon>
        <taxon>Xenopus</taxon>
        <taxon>Xenopus</taxon>
    </lineage>
</organism>
<protein>
    <recommendedName>
        <fullName>Homeobox protein Nkx-2.5</fullName>
        <shortName>xNKx-2.5</shortName>
    </recommendedName>
    <alternativeName>
        <fullName>Homeobox protein NK-2 homolog E</fullName>
    </alternativeName>
</protein>
<feature type="chain" id="PRO_0000048941" description="Homeobox protein Nkx-2.5">
    <location>
        <begin position="1"/>
        <end position="299"/>
    </location>
</feature>
<feature type="DNA-binding region" description="Homeobox" evidence="2 3">
    <location>
        <begin position="124"/>
        <end position="183"/>
    </location>
</feature>
<feature type="region of interest" description="Disordered" evidence="4">
    <location>
        <begin position="90"/>
        <end position="128"/>
    </location>
</feature>
<feature type="compositionally biased region" description="Basic and acidic residues" evidence="4">
    <location>
        <begin position="90"/>
        <end position="119"/>
    </location>
</feature>